<proteinExistence type="inferred from homology"/>
<keyword id="KW-0143">Chaperone</keyword>
<keyword id="KW-0963">Cytoplasm</keyword>
<keyword id="KW-0342">GTP-binding</keyword>
<keyword id="KW-0996">Nickel insertion</keyword>
<keyword id="KW-0547">Nucleotide-binding</keyword>
<reference key="1">
    <citation type="journal article" date="2009" name="Genome Biol.">
        <title>Genomic and genetic analyses of diversity and plant interactions of Pseudomonas fluorescens.</title>
        <authorList>
            <person name="Silby M.W."/>
            <person name="Cerdeno-Tarraga A.M."/>
            <person name="Vernikos G.S."/>
            <person name="Giddens S.R."/>
            <person name="Jackson R.W."/>
            <person name="Preston G.M."/>
            <person name="Zhang X.-X."/>
            <person name="Moon C.D."/>
            <person name="Gehrig S.M."/>
            <person name="Godfrey S.A.C."/>
            <person name="Knight C.G."/>
            <person name="Malone J.G."/>
            <person name="Robinson Z."/>
            <person name="Spiers A.J."/>
            <person name="Harris S."/>
            <person name="Challis G.L."/>
            <person name="Yaxley A.M."/>
            <person name="Harris D."/>
            <person name="Seeger K."/>
            <person name="Murphy L."/>
            <person name="Rutter S."/>
            <person name="Squares R."/>
            <person name="Quail M.A."/>
            <person name="Saunders E."/>
            <person name="Mavromatis K."/>
            <person name="Brettin T.S."/>
            <person name="Bentley S.D."/>
            <person name="Hothersall J."/>
            <person name="Stephens E."/>
            <person name="Thomas C.M."/>
            <person name="Parkhill J."/>
            <person name="Levy S.B."/>
            <person name="Rainey P.B."/>
            <person name="Thomson N.R."/>
        </authorList>
    </citation>
    <scope>NUCLEOTIDE SEQUENCE [LARGE SCALE GENOMIC DNA]</scope>
    <source>
        <strain>Pf0-1</strain>
    </source>
</reference>
<organism>
    <name type="scientific">Pseudomonas fluorescens (strain Pf0-1)</name>
    <dbReference type="NCBI Taxonomy" id="205922"/>
    <lineage>
        <taxon>Bacteria</taxon>
        <taxon>Pseudomonadati</taxon>
        <taxon>Pseudomonadota</taxon>
        <taxon>Gammaproteobacteria</taxon>
        <taxon>Pseudomonadales</taxon>
        <taxon>Pseudomonadaceae</taxon>
        <taxon>Pseudomonas</taxon>
    </lineage>
</organism>
<comment type="function">
    <text evidence="1">Facilitates the functional incorporation of the urease nickel metallocenter. This process requires GTP hydrolysis, probably effectuated by UreG.</text>
</comment>
<comment type="subunit">
    <text evidence="1">Homodimer. UreD, UreF and UreG form a complex that acts as a GTP-hydrolysis-dependent molecular chaperone, activating the urease apoprotein by helping to assemble the nickel containing metallocenter of UreC. The UreE protein probably delivers the nickel.</text>
</comment>
<comment type="subcellular location">
    <subcellularLocation>
        <location evidence="1">Cytoplasm</location>
    </subcellularLocation>
</comment>
<comment type="similarity">
    <text evidence="1">Belongs to the SIMIBI class G3E GTPase family. UreG subfamily.</text>
</comment>
<feature type="chain" id="PRO_1000215140" description="Urease accessory protein UreG">
    <location>
        <begin position="1"/>
        <end position="204"/>
    </location>
</feature>
<feature type="binding site" evidence="1">
    <location>
        <begin position="12"/>
        <end position="19"/>
    </location>
    <ligand>
        <name>GTP</name>
        <dbReference type="ChEBI" id="CHEBI:37565"/>
    </ligand>
</feature>
<gene>
    <name evidence="1" type="primary">ureG</name>
    <name type="ordered locus">Pfl01_0561</name>
</gene>
<protein>
    <recommendedName>
        <fullName evidence="1">Urease accessory protein UreG</fullName>
    </recommendedName>
</protein>
<accession>Q3KIV1</accession>
<sequence>MNTQPLRVGIGGPVGSGKTALTLALCLALRERYNLAVVTNDIYTREDADFLVRNEALAPERIIGVETGGCPHTAIREDASINLEAVDQLNRRFPGLDLILVESGGDNLSATFSPELSDLTIYVIDVSAGDKLPRKGGPGICKSDLLVINKIDLAPLVGASLEMMNSDTQRMRNGKPFVFSNQKTGQGLEEIIAFIERQGLLTAA</sequence>
<evidence type="ECO:0000255" key="1">
    <source>
        <dbReference type="HAMAP-Rule" id="MF_01389"/>
    </source>
</evidence>
<name>UREG_PSEPF</name>
<dbReference type="EMBL" id="CP000094">
    <property type="protein sequence ID" value="ABA72305.1"/>
    <property type="molecule type" value="Genomic_DNA"/>
</dbReference>
<dbReference type="RefSeq" id="WP_008001031.1">
    <property type="nucleotide sequence ID" value="NC_007492.2"/>
</dbReference>
<dbReference type="SMR" id="Q3KIV1"/>
<dbReference type="KEGG" id="pfo:Pfl01_0561"/>
<dbReference type="eggNOG" id="COG0378">
    <property type="taxonomic scope" value="Bacteria"/>
</dbReference>
<dbReference type="HOGENOM" id="CLU_072144_1_0_6"/>
<dbReference type="Proteomes" id="UP000002704">
    <property type="component" value="Chromosome"/>
</dbReference>
<dbReference type="GO" id="GO:0005737">
    <property type="term" value="C:cytoplasm"/>
    <property type="evidence" value="ECO:0007669"/>
    <property type="project" value="UniProtKB-SubCell"/>
</dbReference>
<dbReference type="GO" id="GO:0005525">
    <property type="term" value="F:GTP binding"/>
    <property type="evidence" value="ECO:0007669"/>
    <property type="project" value="UniProtKB-KW"/>
</dbReference>
<dbReference type="GO" id="GO:0003924">
    <property type="term" value="F:GTPase activity"/>
    <property type="evidence" value="ECO:0007669"/>
    <property type="project" value="InterPro"/>
</dbReference>
<dbReference type="GO" id="GO:0016151">
    <property type="term" value="F:nickel cation binding"/>
    <property type="evidence" value="ECO:0007669"/>
    <property type="project" value="UniProtKB-UniRule"/>
</dbReference>
<dbReference type="GO" id="GO:0043419">
    <property type="term" value="P:urea catabolic process"/>
    <property type="evidence" value="ECO:0007669"/>
    <property type="project" value="InterPro"/>
</dbReference>
<dbReference type="CDD" id="cd05540">
    <property type="entry name" value="UreG"/>
    <property type="match status" value="1"/>
</dbReference>
<dbReference type="FunFam" id="3.40.50.300:FF:000208">
    <property type="entry name" value="Urease accessory protein UreG"/>
    <property type="match status" value="1"/>
</dbReference>
<dbReference type="Gene3D" id="3.40.50.300">
    <property type="entry name" value="P-loop containing nucleotide triphosphate hydrolases"/>
    <property type="match status" value="1"/>
</dbReference>
<dbReference type="HAMAP" id="MF_01389">
    <property type="entry name" value="UreG"/>
    <property type="match status" value="1"/>
</dbReference>
<dbReference type="InterPro" id="IPR003495">
    <property type="entry name" value="CobW/HypB/UreG_nucleotide-bd"/>
</dbReference>
<dbReference type="InterPro" id="IPR027417">
    <property type="entry name" value="P-loop_NTPase"/>
</dbReference>
<dbReference type="InterPro" id="IPR004400">
    <property type="entry name" value="UreG"/>
</dbReference>
<dbReference type="NCBIfam" id="TIGR00101">
    <property type="entry name" value="ureG"/>
    <property type="match status" value="1"/>
</dbReference>
<dbReference type="PANTHER" id="PTHR31715">
    <property type="entry name" value="UREASE ACCESSORY PROTEIN G"/>
    <property type="match status" value="1"/>
</dbReference>
<dbReference type="PANTHER" id="PTHR31715:SF0">
    <property type="entry name" value="UREASE ACCESSORY PROTEIN G"/>
    <property type="match status" value="1"/>
</dbReference>
<dbReference type="Pfam" id="PF02492">
    <property type="entry name" value="cobW"/>
    <property type="match status" value="1"/>
</dbReference>
<dbReference type="PIRSF" id="PIRSF005624">
    <property type="entry name" value="Ni-bind_GTPase"/>
    <property type="match status" value="1"/>
</dbReference>
<dbReference type="SUPFAM" id="SSF52540">
    <property type="entry name" value="P-loop containing nucleoside triphosphate hydrolases"/>
    <property type="match status" value="1"/>
</dbReference>